<protein>
    <recommendedName>
        <fullName evidence="1">Thiamine-phosphate synthase</fullName>
        <shortName evidence="1">TP synthase</shortName>
        <shortName evidence="1">TPS</shortName>
        <ecNumber evidence="1">2.5.1.3</ecNumber>
    </recommendedName>
    <alternativeName>
        <fullName evidence="1">Thiamine-phosphate pyrophosphorylase</fullName>
        <shortName evidence="1">TMP pyrophosphorylase</shortName>
        <shortName evidence="1">TMP-PPase</shortName>
    </alternativeName>
</protein>
<accession>P72965</accession>
<reference key="1">
    <citation type="journal article" date="1996" name="DNA Res.">
        <title>Sequence analysis of the genome of the unicellular cyanobacterium Synechocystis sp. strain PCC6803. II. Sequence determination of the entire genome and assignment of potential protein-coding regions.</title>
        <authorList>
            <person name="Kaneko T."/>
            <person name="Sato S."/>
            <person name="Kotani H."/>
            <person name="Tanaka A."/>
            <person name="Asamizu E."/>
            <person name="Nakamura Y."/>
            <person name="Miyajima N."/>
            <person name="Hirosawa M."/>
            <person name="Sugiura M."/>
            <person name="Sasamoto S."/>
            <person name="Kimura T."/>
            <person name="Hosouchi T."/>
            <person name="Matsuno A."/>
            <person name="Muraki A."/>
            <person name="Nakazaki N."/>
            <person name="Naruo K."/>
            <person name="Okumura S."/>
            <person name="Shimpo S."/>
            <person name="Takeuchi C."/>
            <person name="Wada T."/>
            <person name="Watanabe A."/>
            <person name="Yamada M."/>
            <person name="Yasuda M."/>
            <person name="Tabata S."/>
        </authorList>
    </citation>
    <scope>NUCLEOTIDE SEQUENCE [LARGE SCALE GENOMIC DNA]</scope>
    <source>
        <strain>ATCC 27184 / PCC 6803 / Kazusa</strain>
    </source>
</reference>
<sequence>MQQASPTAIARILDANLNRAREGLRTVEEWCRFALENRELAEECKQLRQALAPWHQDDLRAARDTPNDVGTQLTHAQEALRTDVRALLQANLCRVEEALRVLEEYGKLRDPAMGACCKQLRYRVYALESGLLGSKLVQRLQQCSLYLVTSPQENLLATVEAALQGGLKLVQYRDKDAEDQLRWQRAKDLRELCRQYEALFLVNDRVDLALAVDADGVHLGQQDLPIAVARQLLGPDKIIGRSTTNPEEMAKAIAEGADYIGVGPVYATPTKAGKKPAGLEYVQYAVTNSPVPWFAIGGIDGENLGEVMEAGATQVAIVRAIMETTNPTQATAQLLTQLSRINP</sequence>
<comment type="function">
    <text evidence="1">Condenses 4-methyl-5-(beta-hydroxyethyl)thiazole monophosphate (THZ-P) and 2-methyl-4-amino-5-hydroxymethyl pyrimidine pyrophosphate (HMP-PP) to form thiamine monophosphate (TMP).</text>
</comment>
<comment type="catalytic activity">
    <reaction evidence="1">
        <text>2-[(2R,5Z)-2-carboxy-4-methylthiazol-5(2H)-ylidene]ethyl phosphate + 4-amino-2-methyl-5-(diphosphooxymethyl)pyrimidine + 2 H(+) = thiamine phosphate + CO2 + diphosphate</text>
        <dbReference type="Rhea" id="RHEA:47844"/>
        <dbReference type="ChEBI" id="CHEBI:15378"/>
        <dbReference type="ChEBI" id="CHEBI:16526"/>
        <dbReference type="ChEBI" id="CHEBI:33019"/>
        <dbReference type="ChEBI" id="CHEBI:37575"/>
        <dbReference type="ChEBI" id="CHEBI:57841"/>
        <dbReference type="ChEBI" id="CHEBI:62899"/>
        <dbReference type="EC" id="2.5.1.3"/>
    </reaction>
</comment>
<comment type="catalytic activity">
    <reaction evidence="1">
        <text>2-(2-carboxy-4-methylthiazol-5-yl)ethyl phosphate + 4-amino-2-methyl-5-(diphosphooxymethyl)pyrimidine + 2 H(+) = thiamine phosphate + CO2 + diphosphate</text>
        <dbReference type="Rhea" id="RHEA:47848"/>
        <dbReference type="ChEBI" id="CHEBI:15378"/>
        <dbReference type="ChEBI" id="CHEBI:16526"/>
        <dbReference type="ChEBI" id="CHEBI:33019"/>
        <dbReference type="ChEBI" id="CHEBI:37575"/>
        <dbReference type="ChEBI" id="CHEBI:57841"/>
        <dbReference type="ChEBI" id="CHEBI:62890"/>
        <dbReference type="EC" id="2.5.1.3"/>
    </reaction>
</comment>
<comment type="catalytic activity">
    <reaction evidence="1">
        <text>4-methyl-5-(2-phosphooxyethyl)-thiazole + 4-amino-2-methyl-5-(diphosphooxymethyl)pyrimidine + H(+) = thiamine phosphate + diphosphate</text>
        <dbReference type="Rhea" id="RHEA:22328"/>
        <dbReference type="ChEBI" id="CHEBI:15378"/>
        <dbReference type="ChEBI" id="CHEBI:33019"/>
        <dbReference type="ChEBI" id="CHEBI:37575"/>
        <dbReference type="ChEBI" id="CHEBI:57841"/>
        <dbReference type="ChEBI" id="CHEBI:58296"/>
        <dbReference type="EC" id="2.5.1.3"/>
    </reaction>
</comment>
<comment type="cofactor">
    <cofactor evidence="1">
        <name>Mg(2+)</name>
        <dbReference type="ChEBI" id="CHEBI:18420"/>
    </cofactor>
    <text evidence="1">Binds 1 Mg(2+) ion per subunit.</text>
</comment>
<comment type="pathway">
    <text evidence="1">Cofactor biosynthesis; thiamine diphosphate biosynthesis; thiamine phosphate from 4-amino-2-methyl-5-diphosphomethylpyrimidine and 4-methyl-5-(2-phosphoethyl)-thiazole: step 1/1.</text>
</comment>
<comment type="similarity">
    <text evidence="1">Belongs to the thiamine-phosphate synthase family.</text>
</comment>
<proteinExistence type="inferred from homology"/>
<name>THIE_SYNY3</name>
<gene>
    <name evidence="1" type="primary">thiE</name>
    <name type="ordered locus">sll0635</name>
</gene>
<organism>
    <name type="scientific">Synechocystis sp. (strain ATCC 27184 / PCC 6803 / Kazusa)</name>
    <dbReference type="NCBI Taxonomy" id="1111708"/>
    <lineage>
        <taxon>Bacteria</taxon>
        <taxon>Bacillati</taxon>
        <taxon>Cyanobacteriota</taxon>
        <taxon>Cyanophyceae</taxon>
        <taxon>Synechococcales</taxon>
        <taxon>Merismopediaceae</taxon>
        <taxon>Synechocystis</taxon>
    </lineage>
</organism>
<evidence type="ECO:0000255" key="1">
    <source>
        <dbReference type="HAMAP-Rule" id="MF_01327"/>
    </source>
</evidence>
<feature type="chain" id="PRO_0000157086" description="Thiamine-phosphate synthase">
    <location>
        <begin position="1"/>
        <end position="343"/>
    </location>
</feature>
<feature type="region of interest" description="Unknown">
    <location>
        <begin position="1"/>
        <end position="123"/>
    </location>
</feature>
<feature type="region of interest" description="Thiamine-phosphate synthase">
    <location>
        <begin position="124"/>
        <end position="343"/>
    </location>
</feature>
<feature type="binding site" evidence="1">
    <location>
        <begin position="171"/>
        <end position="175"/>
    </location>
    <ligand>
        <name>4-amino-2-methyl-5-(diphosphooxymethyl)pyrimidine</name>
        <dbReference type="ChEBI" id="CHEBI:57841"/>
    </ligand>
</feature>
<feature type="binding site" evidence="1">
    <location>
        <position position="203"/>
    </location>
    <ligand>
        <name>4-amino-2-methyl-5-(diphosphooxymethyl)pyrimidine</name>
        <dbReference type="ChEBI" id="CHEBI:57841"/>
    </ligand>
</feature>
<feature type="binding site" evidence="1">
    <location>
        <position position="204"/>
    </location>
    <ligand>
        <name>Mg(2+)</name>
        <dbReference type="ChEBI" id="CHEBI:18420"/>
    </ligand>
</feature>
<feature type="binding site" evidence="1">
    <location>
        <position position="223"/>
    </location>
    <ligand>
        <name>Mg(2+)</name>
        <dbReference type="ChEBI" id="CHEBI:18420"/>
    </ligand>
</feature>
<feature type="binding site" evidence="1">
    <location>
        <position position="242"/>
    </location>
    <ligand>
        <name>4-amino-2-methyl-5-(diphosphooxymethyl)pyrimidine</name>
        <dbReference type="ChEBI" id="CHEBI:57841"/>
    </ligand>
</feature>
<feature type="binding site" evidence="1">
    <location>
        <begin position="268"/>
        <end position="270"/>
    </location>
    <ligand>
        <name>2-[(2R,5Z)-2-carboxy-4-methylthiazol-5(2H)-ylidene]ethyl phosphate</name>
        <dbReference type="ChEBI" id="CHEBI:62899"/>
    </ligand>
</feature>
<feature type="binding site" evidence="1">
    <location>
        <position position="271"/>
    </location>
    <ligand>
        <name>4-amino-2-methyl-5-(diphosphooxymethyl)pyrimidine</name>
        <dbReference type="ChEBI" id="CHEBI:57841"/>
    </ligand>
</feature>
<feature type="binding site" evidence="1">
    <location>
        <position position="298"/>
    </location>
    <ligand>
        <name>2-[(2R,5Z)-2-carboxy-4-methylthiazol-5(2H)-ylidene]ethyl phosphate</name>
        <dbReference type="ChEBI" id="CHEBI:62899"/>
    </ligand>
</feature>
<dbReference type="EC" id="2.5.1.3" evidence="1"/>
<dbReference type="EMBL" id="BA000022">
    <property type="protein sequence ID" value="BAA16983.1"/>
    <property type="molecule type" value="Genomic_DNA"/>
</dbReference>
<dbReference type="PIR" id="S74943">
    <property type="entry name" value="S74943"/>
</dbReference>
<dbReference type="SMR" id="P72965"/>
<dbReference type="FunCoup" id="P72965">
    <property type="interactions" value="325"/>
</dbReference>
<dbReference type="STRING" id="1148.gene:10497843"/>
<dbReference type="PaxDb" id="1148-1652058"/>
<dbReference type="EnsemblBacteria" id="BAA16983">
    <property type="protein sequence ID" value="BAA16983"/>
    <property type="gene ID" value="BAA16983"/>
</dbReference>
<dbReference type="KEGG" id="syn:sll0635"/>
<dbReference type="eggNOG" id="COG0352">
    <property type="taxonomic scope" value="Bacteria"/>
</dbReference>
<dbReference type="InParanoid" id="P72965"/>
<dbReference type="PhylomeDB" id="P72965"/>
<dbReference type="UniPathway" id="UPA00060">
    <property type="reaction ID" value="UER00141"/>
</dbReference>
<dbReference type="Proteomes" id="UP000001425">
    <property type="component" value="Chromosome"/>
</dbReference>
<dbReference type="GO" id="GO:0005829">
    <property type="term" value="C:cytosol"/>
    <property type="evidence" value="ECO:0000318"/>
    <property type="project" value="GO_Central"/>
</dbReference>
<dbReference type="GO" id="GO:0008902">
    <property type="term" value="F:hydroxymethylpyrimidine kinase activity"/>
    <property type="evidence" value="ECO:0000318"/>
    <property type="project" value="GO_Central"/>
</dbReference>
<dbReference type="GO" id="GO:0000287">
    <property type="term" value="F:magnesium ion binding"/>
    <property type="evidence" value="ECO:0007669"/>
    <property type="project" value="UniProtKB-UniRule"/>
</dbReference>
<dbReference type="GO" id="GO:0008972">
    <property type="term" value="F:phosphomethylpyrimidine kinase activity"/>
    <property type="evidence" value="ECO:0000318"/>
    <property type="project" value="GO_Central"/>
</dbReference>
<dbReference type="GO" id="GO:0004789">
    <property type="term" value="F:thiamine-phosphate diphosphorylase activity"/>
    <property type="evidence" value="ECO:0007669"/>
    <property type="project" value="UniProtKB-UniRule"/>
</dbReference>
<dbReference type="GO" id="GO:0009228">
    <property type="term" value="P:thiamine biosynthetic process"/>
    <property type="evidence" value="ECO:0000318"/>
    <property type="project" value="GO_Central"/>
</dbReference>
<dbReference type="GO" id="GO:0009229">
    <property type="term" value="P:thiamine diphosphate biosynthetic process"/>
    <property type="evidence" value="ECO:0007669"/>
    <property type="project" value="UniProtKB-UniRule"/>
</dbReference>
<dbReference type="CDD" id="cd00564">
    <property type="entry name" value="TMP_TenI"/>
    <property type="match status" value="1"/>
</dbReference>
<dbReference type="FunFam" id="3.20.20.70:FF:000178">
    <property type="entry name" value="Thiamine-phosphate synthase"/>
    <property type="match status" value="1"/>
</dbReference>
<dbReference type="Gene3D" id="3.20.20.70">
    <property type="entry name" value="Aldolase class I"/>
    <property type="match status" value="1"/>
</dbReference>
<dbReference type="HAMAP" id="MF_00097">
    <property type="entry name" value="TMP_synthase"/>
    <property type="match status" value="1"/>
</dbReference>
<dbReference type="HAMAP" id="MF_01327">
    <property type="entry name" value="TMP_synthase_cyanobact"/>
    <property type="match status" value="1"/>
</dbReference>
<dbReference type="InterPro" id="IPR013785">
    <property type="entry name" value="Aldolase_TIM"/>
</dbReference>
<dbReference type="InterPro" id="IPR036206">
    <property type="entry name" value="ThiamineP_synth_sf"/>
</dbReference>
<dbReference type="InterPro" id="IPR022998">
    <property type="entry name" value="ThiamineP_synth_TenI"/>
</dbReference>
<dbReference type="InterPro" id="IPR041397">
    <property type="entry name" value="ThiD2"/>
</dbReference>
<dbReference type="InterPro" id="IPR034291">
    <property type="entry name" value="TMP_synthase"/>
</dbReference>
<dbReference type="InterPro" id="IPR016229">
    <property type="entry name" value="TMP_synthase_cyanobac_bac"/>
</dbReference>
<dbReference type="NCBIfam" id="NF002727">
    <property type="entry name" value="PRK02615.1"/>
    <property type="match status" value="1"/>
</dbReference>
<dbReference type="NCBIfam" id="TIGR00693">
    <property type="entry name" value="thiE"/>
    <property type="match status" value="1"/>
</dbReference>
<dbReference type="PANTHER" id="PTHR20857">
    <property type="entry name" value="THIAMINE-PHOSPHATE PYROPHOSPHORYLASE"/>
    <property type="match status" value="1"/>
</dbReference>
<dbReference type="PANTHER" id="PTHR20857:SF15">
    <property type="entry name" value="THIAMINE-PHOSPHATE SYNTHASE"/>
    <property type="match status" value="1"/>
</dbReference>
<dbReference type="Pfam" id="PF17792">
    <property type="entry name" value="ThiD2"/>
    <property type="match status" value="1"/>
</dbReference>
<dbReference type="Pfam" id="PF02581">
    <property type="entry name" value="TMP-TENI"/>
    <property type="match status" value="1"/>
</dbReference>
<dbReference type="PIRSF" id="PIRSF000512">
    <property type="entry name" value="TMP_PPase_Cyanobac_prd"/>
    <property type="match status" value="1"/>
</dbReference>
<dbReference type="SUPFAM" id="SSF51391">
    <property type="entry name" value="Thiamin phosphate synthase"/>
    <property type="match status" value="1"/>
</dbReference>
<keyword id="KW-0460">Magnesium</keyword>
<keyword id="KW-0479">Metal-binding</keyword>
<keyword id="KW-1185">Reference proteome</keyword>
<keyword id="KW-0784">Thiamine biosynthesis</keyword>
<keyword id="KW-0808">Transferase</keyword>